<gene>
    <name type="ordered locus">Sde_2812</name>
</gene>
<protein>
    <recommendedName>
        <fullName evidence="1">PKHD-type hydroxylase Sde_2812</fullName>
        <ecNumber evidence="1">1.14.11.-</ecNumber>
    </recommendedName>
</protein>
<organism>
    <name type="scientific">Saccharophagus degradans (strain 2-40 / ATCC 43961 / DSM 17024)</name>
    <dbReference type="NCBI Taxonomy" id="203122"/>
    <lineage>
        <taxon>Bacteria</taxon>
        <taxon>Pseudomonadati</taxon>
        <taxon>Pseudomonadota</taxon>
        <taxon>Gammaproteobacteria</taxon>
        <taxon>Cellvibrionales</taxon>
        <taxon>Cellvibrionaceae</taxon>
        <taxon>Saccharophagus</taxon>
    </lineage>
</organism>
<accession>Q21GW0</accession>
<reference key="1">
    <citation type="journal article" date="2008" name="PLoS Genet.">
        <title>Complete genome sequence of the complex carbohydrate-degrading marine bacterium, Saccharophagus degradans strain 2-40 T.</title>
        <authorList>
            <person name="Weiner R.M."/>
            <person name="Taylor L.E. II"/>
            <person name="Henrissat B."/>
            <person name="Hauser L."/>
            <person name="Land M."/>
            <person name="Coutinho P.M."/>
            <person name="Rancurel C."/>
            <person name="Saunders E.H."/>
            <person name="Longmire A.G."/>
            <person name="Zhang H."/>
            <person name="Bayer E.A."/>
            <person name="Gilbert H.J."/>
            <person name="Larimer F."/>
            <person name="Zhulin I.B."/>
            <person name="Ekborg N.A."/>
            <person name="Lamed R."/>
            <person name="Richardson P.M."/>
            <person name="Borovok I."/>
            <person name="Hutcheson S."/>
        </authorList>
    </citation>
    <scope>NUCLEOTIDE SEQUENCE [LARGE SCALE GENOMIC DNA]</scope>
    <source>
        <strain>2-40 / ATCC 43961 / DSM 17024</strain>
    </source>
</reference>
<evidence type="ECO:0000255" key="1">
    <source>
        <dbReference type="HAMAP-Rule" id="MF_00657"/>
    </source>
</evidence>
<name>Y2812_SACD2</name>
<keyword id="KW-0223">Dioxygenase</keyword>
<keyword id="KW-0408">Iron</keyword>
<keyword id="KW-0479">Metal-binding</keyword>
<keyword id="KW-0560">Oxidoreductase</keyword>
<keyword id="KW-1185">Reference proteome</keyword>
<keyword id="KW-0847">Vitamin C</keyword>
<sequence length="226" mass="24947">MLLKIPNVLSKEQVETAKSKLLDADWADGNITAGYQSAKAKNNLQLPENSPIAIELGDIVLTALAQNNMFMSAALPLKIFPPLFNCYQGGRSFGVHVDNAIRQVPGTPVKVRTDISMTLFLSEPDEYEGGELVIEDTYGSQSVKLAAGDMVLYPATSLHSVTPVTKGRRLASFFWLQSMVNSDEKRTLLFDMDMAIQSLRAQVDDSPEIVQLTGVYHNLLRQWAQT</sequence>
<proteinExistence type="inferred from homology"/>
<feature type="chain" id="PRO_1000061738" description="PKHD-type hydroxylase Sde_2812">
    <location>
        <begin position="1"/>
        <end position="226"/>
    </location>
</feature>
<feature type="domain" description="Fe2OG dioxygenase" evidence="1">
    <location>
        <begin position="78"/>
        <end position="178"/>
    </location>
</feature>
<feature type="binding site" evidence="1">
    <location>
        <position position="96"/>
    </location>
    <ligand>
        <name>Fe cation</name>
        <dbReference type="ChEBI" id="CHEBI:24875"/>
    </ligand>
</feature>
<feature type="binding site" evidence="1">
    <location>
        <position position="98"/>
    </location>
    <ligand>
        <name>Fe cation</name>
        <dbReference type="ChEBI" id="CHEBI:24875"/>
    </ligand>
</feature>
<feature type="binding site" evidence="1">
    <location>
        <position position="159"/>
    </location>
    <ligand>
        <name>Fe cation</name>
        <dbReference type="ChEBI" id="CHEBI:24875"/>
    </ligand>
</feature>
<feature type="binding site" evidence="1">
    <location>
        <position position="169"/>
    </location>
    <ligand>
        <name>2-oxoglutarate</name>
        <dbReference type="ChEBI" id="CHEBI:16810"/>
    </ligand>
</feature>
<dbReference type="EC" id="1.14.11.-" evidence="1"/>
<dbReference type="EMBL" id="CP000282">
    <property type="protein sequence ID" value="ABD82069.1"/>
    <property type="molecule type" value="Genomic_DNA"/>
</dbReference>
<dbReference type="RefSeq" id="WP_011469285.1">
    <property type="nucleotide sequence ID" value="NC_007912.1"/>
</dbReference>
<dbReference type="SMR" id="Q21GW0"/>
<dbReference type="STRING" id="203122.Sde_2812"/>
<dbReference type="GeneID" id="98614465"/>
<dbReference type="KEGG" id="sde:Sde_2812"/>
<dbReference type="eggNOG" id="COG3128">
    <property type="taxonomic scope" value="Bacteria"/>
</dbReference>
<dbReference type="HOGENOM" id="CLU_106663_0_0_6"/>
<dbReference type="OrthoDB" id="9812472at2"/>
<dbReference type="Proteomes" id="UP000001947">
    <property type="component" value="Chromosome"/>
</dbReference>
<dbReference type="GO" id="GO:0016706">
    <property type="term" value="F:2-oxoglutarate-dependent dioxygenase activity"/>
    <property type="evidence" value="ECO:0007669"/>
    <property type="project" value="UniProtKB-UniRule"/>
</dbReference>
<dbReference type="GO" id="GO:0005506">
    <property type="term" value="F:iron ion binding"/>
    <property type="evidence" value="ECO:0007669"/>
    <property type="project" value="UniProtKB-UniRule"/>
</dbReference>
<dbReference type="GO" id="GO:0031418">
    <property type="term" value="F:L-ascorbic acid binding"/>
    <property type="evidence" value="ECO:0007669"/>
    <property type="project" value="UniProtKB-KW"/>
</dbReference>
<dbReference type="GO" id="GO:0006974">
    <property type="term" value="P:DNA damage response"/>
    <property type="evidence" value="ECO:0007669"/>
    <property type="project" value="TreeGrafter"/>
</dbReference>
<dbReference type="GO" id="GO:0006879">
    <property type="term" value="P:intracellular iron ion homeostasis"/>
    <property type="evidence" value="ECO:0007669"/>
    <property type="project" value="TreeGrafter"/>
</dbReference>
<dbReference type="Gene3D" id="2.60.120.620">
    <property type="entry name" value="q2cbj1_9rhob like domain"/>
    <property type="match status" value="1"/>
</dbReference>
<dbReference type="Gene3D" id="4.10.860.20">
    <property type="entry name" value="Rabenosyn, Rab binding domain"/>
    <property type="match status" value="1"/>
</dbReference>
<dbReference type="HAMAP" id="MF_00657">
    <property type="entry name" value="Hydroxyl_YbiX"/>
    <property type="match status" value="1"/>
</dbReference>
<dbReference type="InterPro" id="IPR005123">
    <property type="entry name" value="Oxoglu/Fe-dep_dioxygenase_dom"/>
</dbReference>
<dbReference type="InterPro" id="IPR041097">
    <property type="entry name" value="PKHD_C"/>
</dbReference>
<dbReference type="InterPro" id="IPR023550">
    <property type="entry name" value="PKHD_hydroxylase"/>
</dbReference>
<dbReference type="InterPro" id="IPR006620">
    <property type="entry name" value="Pro_4_hyd_alph"/>
</dbReference>
<dbReference type="InterPro" id="IPR044862">
    <property type="entry name" value="Pro_4_hyd_alph_FE2OG_OXY"/>
</dbReference>
<dbReference type="NCBIfam" id="NF003973">
    <property type="entry name" value="PRK05467.1-2"/>
    <property type="match status" value="1"/>
</dbReference>
<dbReference type="NCBIfam" id="NF003974">
    <property type="entry name" value="PRK05467.1-3"/>
    <property type="match status" value="1"/>
</dbReference>
<dbReference type="NCBIfam" id="NF003975">
    <property type="entry name" value="PRK05467.1-4"/>
    <property type="match status" value="1"/>
</dbReference>
<dbReference type="PANTHER" id="PTHR41536">
    <property type="entry name" value="PKHD-TYPE HYDROXYLASE YBIX"/>
    <property type="match status" value="1"/>
</dbReference>
<dbReference type="PANTHER" id="PTHR41536:SF1">
    <property type="entry name" value="PKHD-TYPE HYDROXYLASE YBIX"/>
    <property type="match status" value="1"/>
</dbReference>
<dbReference type="Pfam" id="PF13640">
    <property type="entry name" value="2OG-FeII_Oxy_3"/>
    <property type="match status" value="1"/>
</dbReference>
<dbReference type="Pfam" id="PF18331">
    <property type="entry name" value="PKHD_C"/>
    <property type="match status" value="1"/>
</dbReference>
<dbReference type="SMART" id="SM00702">
    <property type="entry name" value="P4Hc"/>
    <property type="match status" value="1"/>
</dbReference>
<dbReference type="SUPFAM" id="SSF51197">
    <property type="entry name" value="Clavaminate synthase-like"/>
    <property type="match status" value="1"/>
</dbReference>
<dbReference type="PROSITE" id="PS51471">
    <property type="entry name" value="FE2OG_OXY"/>
    <property type="match status" value="1"/>
</dbReference>
<comment type="cofactor">
    <cofactor evidence="1">
        <name>Fe(2+)</name>
        <dbReference type="ChEBI" id="CHEBI:29033"/>
    </cofactor>
    <text evidence="1">Binds 1 Fe(2+) ion per subunit.</text>
</comment>
<comment type="cofactor">
    <cofactor evidence="1">
        <name>L-ascorbate</name>
        <dbReference type="ChEBI" id="CHEBI:38290"/>
    </cofactor>
</comment>